<feature type="transit peptide" description="Chloroplast" evidence="1">
    <location>
        <begin position="1"/>
        <end position="52"/>
    </location>
</feature>
<feature type="chain" id="PRO_0000018550" description="4-alpha-glucanotransferase, chloroplastic/amyloplastic">
    <location>
        <begin position="53"/>
        <end position="576"/>
    </location>
</feature>
<feature type="helix" evidence="3">
    <location>
        <begin position="65"/>
        <end position="67"/>
    </location>
</feature>
<feature type="helix" evidence="3">
    <location>
        <begin position="74"/>
        <end position="76"/>
    </location>
</feature>
<feature type="strand" evidence="3">
    <location>
        <begin position="79"/>
        <end position="83"/>
    </location>
</feature>
<feature type="helix" evidence="3">
    <location>
        <begin position="86"/>
        <end position="88"/>
    </location>
</feature>
<feature type="strand" evidence="5">
    <location>
        <begin position="92"/>
        <end position="95"/>
    </location>
</feature>
<feature type="helix" evidence="3">
    <location>
        <begin position="100"/>
        <end position="112"/>
    </location>
</feature>
<feature type="strand" evidence="3">
    <location>
        <begin position="116"/>
        <end position="118"/>
    </location>
</feature>
<feature type="strand" evidence="3">
    <location>
        <begin position="128"/>
        <end position="130"/>
    </location>
</feature>
<feature type="strand" evidence="3">
    <location>
        <begin position="137"/>
        <end position="139"/>
    </location>
</feature>
<feature type="strand" evidence="3">
    <location>
        <begin position="141"/>
        <end position="143"/>
    </location>
</feature>
<feature type="helix" evidence="3">
    <location>
        <begin position="146"/>
        <end position="148"/>
    </location>
</feature>
<feature type="helix" evidence="3">
    <location>
        <begin position="151"/>
        <end position="156"/>
    </location>
</feature>
<feature type="helix" evidence="3">
    <location>
        <begin position="162"/>
        <end position="164"/>
    </location>
</feature>
<feature type="turn" evidence="3">
    <location>
        <begin position="176"/>
        <end position="178"/>
    </location>
</feature>
<feature type="helix" evidence="3">
    <location>
        <begin position="179"/>
        <end position="196"/>
    </location>
</feature>
<feature type="helix" evidence="3">
    <location>
        <begin position="200"/>
        <end position="210"/>
    </location>
</feature>
<feature type="helix" evidence="3">
    <location>
        <begin position="212"/>
        <end position="231"/>
    </location>
</feature>
<feature type="helix" evidence="3">
    <location>
        <begin position="236"/>
        <end position="238"/>
    </location>
</feature>
<feature type="helix" evidence="3">
    <location>
        <begin position="241"/>
        <end position="244"/>
    </location>
</feature>
<feature type="helix" evidence="3">
    <location>
        <begin position="248"/>
        <end position="257"/>
    </location>
</feature>
<feature type="helix" evidence="3">
    <location>
        <begin position="259"/>
        <end position="285"/>
    </location>
</feature>
<feature type="strand" evidence="3">
    <location>
        <begin position="289"/>
        <end position="297"/>
    </location>
</feature>
<feature type="strand" evidence="3">
    <location>
        <begin position="300"/>
        <end position="302"/>
    </location>
</feature>
<feature type="helix" evidence="3">
    <location>
        <begin position="303"/>
        <end position="306"/>
    </location>
</feature>
<feature type="helix" evidence="3">
    <location>
        <begin position="309"/>
        <end position="311"/>
    </location>
</feature>
<feature type="strand" evidence="3">
    <location>
        <begin position="320"/>
        <end position="326"/>
    </location>
</feature>
<feature type="strand" evidence="3">
    <location>
        <begin position="329"/>
        <end position="333"/>
    </location>
</feature>
<feature type="strand" evidence="4">
    <location>
        <begin position="336"/>
        <end position="341"/>
    </location>
</feature>
<feature type="helix" evidence="3">
    <location>
        <begin position="345"/>
        <end position="350"/>
    </location>
</feature>
<feature type="helix" evidence="3">
    <location>
        <begin position="354"/>
        <end position="366"/>
    </location>
</feature>
<feature type="strand" evidence="3">
    <location>
        <begin position="368"/>
        <end position="373"/>
    </location>
</feature>
<feature type="helix" evidence="3">
    <location>
        <begin position="375"/>
        <end position="378"/>
    </location>
</feature>
<feature type="strand" evidence="3">
    <location>
        <begin position="380"/>
        <end position="385"/>
    </location>
</feature>
<feature type="strand" evidence="3">
    <location>
        <begin position="389"/>
        <end position="393"/>
    </location>
</feature>
<feature type="strand" evidence="3">
    <location>
        <begin position="395"/>
        <end position="398"/>
    </location>
</feature>
<feature type="helix" evidence="3">
    <location>
        <begin position="402"/>
        <end position="412"/>
    </location>
</feature>
<feature type="strand" evidence="3">
    <location>
        <begin position="416"/>
        <end position="419"/>
    </location>
</feature>
<feature type="helix" evidence="3">
    <location>
        <begin position="427"/>
        <end position="435"/>
    </location>
</feature>
<feature type="strand" evidence="3">
    <location>
        <begin position="440"/>
        <end position="443"/>
    </location>
</feature>
<feature type="helix" evidence="3">
    <location>
        <begin position="444"/>
        <end position="446"/>
    </location>
</feature>
<feature type="strand" evidence="3">
    <location>
        <begin position="447"/>
        <end position="450"/>
    </location>
</feature>
<feature type="helix" evidence="3">
    <location>
        <begin position="458"/>
        <end position="460"/>
    </location>
</feature>
<feature type="strand" evidence="3">
    <location>
        <begin position="463"/>
        <end position="469"/>
    </location>
</feature>
<feature type="helix" evidence="3">
    <location>
        <begin position="477"/>
        <end position="482"/>
    </location>
</feature>
<feature type="helix" evidence="3">
    <location>
        <begin position="486"/>
        <end position="495"/>
    </location>
</feature>
<feature type="helix" evidence="3">
    <location>
        <begin position="501"/>
        <end position="503"/>
    </location>
</feature>
<feature type="helix" evidence="3">
    <location>
        <begin position="504"/>
        <end position="513"/>
    </location>
</feature>
<feature type="strand" evidence="3">
    <location>
        <begin position="518"/>
        <end position="523"/>
    </location>
</feature>
<feature type="helix" evidence="3">
    <location>
        <begin position="524"/>
        <end position="527"/>
    </location>
</feature>
<feature type="helix" evidence="3">
    <location>
        <begin position="532"/>
        <end position="534"/>
    </location>
</feature>
<feature type="strand" evidence="3">
    <location>
        <begin position="542"/>
        <end position="544"/>
    </location>
</feature>
<feature type="helix" evidence="3">
    <location>
        <begin position="556"/>
        <end position="558"/>
    </location>
</feature>
<feature type="helix" evidence="3">
    <location>
        <begin position="560"/>
        <end position="572"/>
    </location>
</feature>
<organism>
    <name type="scientific">Solanum tuberosum</name>
    <name type="common">Potato</name>
    <dbReference type="NCBI Taxonomy" id="4113"/>
    <lineage>
        <taxon>Eukaryota</taxon>
        <taxon>Viridiplantae</taxon>
        <taxon>Streptophyta</taxon>
        <taxon>Embryophyta</taxon>
        <taxon>Tracheophyta</taxon>
        <taxon>Spermatophyta</taxon>
        <taxon>Magnoliopsida</taxon>
        <taxon>eudicotyledons</taxon>
        <taxon>Gunneridae</taxon>
        <taxon>Pentapetalae</taxon>
        <taxon>asterids</taxon>
        <taxon>lamiids</taxon>
        <taxon>Solanales</taxon>
        <taxon>Solanaceae</taxon>
        <taxon>Solanoideae</taxon>
        <taxon>Solaneae</taxon>
        <taxon>Solanum</taxon>
    </lineage>
</organism>
<gene>
    <name type="primary">DPEP</name>
</gene>
<dbReference type="EC" id="2.4.1.25"/>
<dbReference type="EMBL" id="X68664">
    <property type="protein sequence ID" value="CAA48630.1"/>
    <property type="molecule type" value="mRNA"/>
</dbReference>
<dbReference type="PIR" id="A45049">
    <property type="entry name" value="A45049"/>
</dbReference>
<dbReference type="RefSeq" id="NP_001274781.1">
    <property type="nucleotide sequence ID" value="NM_001287852.1"/>
</dbReference>
<dbReference type="PDB" id="1X1N">
    <property type="method" value="X-ray"/>
    <property type="resolution" value="1.80 A"/>
    <property type="chains" value="A=53-576"/>
</dbReference>
<dbReference type="PDB" id="6LX1">
    <property type="method" value="X-ray"/>
    <property type="resolution" value="2.03 A"/>
    <property type="chains" value="A=53-576"/>
</dbReference>
<dbReference type="PDB" id="6LX2">
    <property type="method" value="X-ray"/>
    <property type="resolution" value="2.05 A"/>
    <property type="chains" value="A=53-576"/>
</dbReference>
<dbReference type="PDB" id="7COV">
    <property type="method" value="X-ray"/>
    <property type="resolution" value="2.00 A"/>
    <property type="chains" value="A=1-576"/>
</dbReference>
<dbReference type="PDBsum" id="1X1N"/>
<dbReference type="PDBsum" id="6LX1"/>
<dbReference type="PDBsum" id="6LX2"/>
<dbReference type="PDBsum" id="7COV"/>
<dbReference type="SMR" id="Q06801"/>
<dbReference type="FunCoup" id="Q06801">
    <property type="interactions" value="403"/>
</dbReference>
<dbReference type="STRING" id="4113.Q06801"/>
<dbReference type="CAZy" id="GH77">
    <property type="family name" value="Glycoside Hydrolase Family 77"/>
</dbReference>
<dbReference type="PaxDb" id="4113-PGSC0003DMT400042739"/>
<dbReference type="GeneID" id="102595076"/>
<dbReference type="KEGG" id="sot:102595076"/>
<dbReference type="eggNOG" id="ENOG502QU40">
    <property type="taxonomic scope" value="Eukaryota"/>
</dbReference>
<dbReference type="InParanoid" id="Q06801"/>
<dbReference type="OrthoDB" id="6123450at2759"/>
<dbReference type="BRENDA" id="2.4.1.25">
    <property type="organism ID" value="5757"/>
</dbReference>
<dbReference type="EvolutionaryTrace" id="Q06801"/>
<dbReference type="Proteomes" id="UP000011115">
    <property type="component" value="Unassembled WGS sequence"/>
</dbReference>
<dbReference type="ExpressionAtlas" id="Q06801">
    <property type="expression patterns" value="baseline"/>
</dbReference>
<dbReference type="GO" id="GO:0009501">
    <property type="term" value="C:amyloplast"/>
    <property type="evidence" value="ECO:0007669"/>
    <property type="project" value="UniProtKB-SubCell"/>
</dbReference>
<dbReference type="GO" id="GO:0009507">
    <property type="term" value="C:chloroplast"/>
    <property type="evidence" value="ECO:0007669"/>
    <property type="project" value="UniProtKB-SubCell"/>
</dbReference>
<dbReference type="GO" id="GO:0004134">
    <property type="term" value="F:4-alpha-glucanotransferase activity"/>
    <property type="evidence" value="ECO:0007669"/>
    <property type="project" value="UniProtKB-EC"/>
</dbReference>
<dbReference type="GO" id="GO:0005975">
    <property type="term" value="P:carbohydrate metabolic process"/>
    <property type="evidence" value="ECO:0007669"/>
    <property type="project" value="InterPro"/>
</dbReference>
<dbReference type="FunFam" id="3.20.20.80:FF:000193">
    <property type="entry name" value="4-alpha-glucanotransferase, chloroplastic/amyloplastic"/>
    <property type="match status" value="1"/>
</dbReference>
<dbReference type="Gene3D" id="3.20.20.80">
    <property type="entry name" value="Glycosidases"/>
    <property type="match status" value="1"/>
</dbReference>
<dbReference type="InterPro" id="IPR003385">
    <property type="entry name" value="Glyco_hydro_77"/>
</dbReference>
<dbReference type="InterPro" id="IPR017853">
    <property type="entry name" value="Glycoside_hydrolase_SF"/>
</dbReference>
<dbReference type="NCBIfam" id="TIGR00217">
    <property type="entry name" value="malQ"/>
    <property type="match status" value="1"/>
</dbReference>
<dbReference type="NCBIfam" id="NF011080">
    <property type="entry name" value="PRK14508.1-3"/>
    <property type="match status" value="1"/>
</dbReference>
<dbReference type="PANTHER" id="PTHR32438">
    <property type="entry name" value="4-ALPHA-GLUCANOTRANSFERASE DPE1, CHLOROPLASTIC/AMYLOPLASTIC"/>
    <property type="match status" value="1"/>
</dbReference>
<dbReference type="PANTHER" id="PTHR32438:SF5">
    <property type="entry name" value="4-ALPHA-GLUCANOTRANSFERASE DPE1, CHLOROPLASTIC_AMYLOPLASTIC"/>
    <property type="match status" value="1"/>
</dbReference>
<dbReference type="Pfam" id="PF02446">
    <property type="entry name" value="Glyco_hydro_77"/>
    <property type="match status" value="1"/>
</dbReference>
<dbReference type="SUPFAM" id="SSF51445">
    <property type="entry name" value="(Trans)glycosidases"/>
    <property type="match status" value="1"/>
</dbReference>
<accession>Q06801</accession>
<reference key="1">
    <citation type="journal article" date="1993" name="J. Biol. Chem.">
        <title>Disproportionating enzyme (4-alpha-glucanotransferase; EC 2.4.1.25) of potato. Purification, molecular cloning, and potential role in starch metabolism.</title>
        <authorList>
            <person name="Takaha T."/>
            <person name="Yanase M."/>
            <person name="Okada S."/>
            <person name="Smith S.M."/>
        </authorList>
    </citation>
    <scope>NUCLEOTIDE SEQUENCE [MRNA]</scope>
    <scope>PROTEIN SEQUENCE OF 53-57; 174-183 AND 247-259</scope>
    <source>
        <strain>cv. May Queen</strain>
        <tissue>Tuber</tissue>
    </source>
</reference>
<reference key="2">
    <citation type="submission" date="2005-04" db="PDB data bank">
        <title>Structure determination and refinement at 1.8 A resolution of disproportionating enzyme from potato.</title>
        <authorList>
            <person name="Imamura K."/>
            <person name="Matsuura T."/>
            <person name="Takaha T."/>
            <person name="Fujii K."/>
            <person name="Nakagawa A."/>
            <person name="Kusunoki M."/>
            <person name="Nitta Y."/>
        </authorList>
    </citation>
    <scope>X-RAY CRYSTALLOGRAPHY (1.8 ANGSTROMS) OF 53-576</scope>
</reference>
<evidence type="ECO:0000269" key="1">
    <source>
    </source>
</evidence>
<evidence type="ECO:0000305" key="2"/>
<evidence type="ECO:0007829" key="3">
    <source>
        <dbReference type="PDB" id="1X1N"/>
    </source>
</evidence>
<evidence type="ECO:0007829" key="4">
    <source>
        <dbReference type="PDB" id="6LX1"/>
    </source>
</evidence>
<evidence type="ECO:0007829" key="5">
    <source>
        <dbReference type="PDB" id="6LX2"/>
    </source>
</evidence>
<sequence length="576" mass="64951">MAIHTCFSLIPSSFSSPKLPYPKNTTFQSPIPKLSRPTFMFDRKGSFQNGTAAVPAVGEDFPIDYADWLPKRDPNDRRRAGILLHPTSFPGPYGIGDLGPQAFKFLDWLHLAGCSLWQVLPLVPPGKRGNEDGSPYSGQDANCGNTLLISLEELVDDGLLKMEELPEPLPTDRVNYSTISEIKDPLITKAAKRLLSSEGELKDQLENFRRDPNISSWLEDAAYFAAIDNSVNTISWYDWPEPLKNRHLAALEEVYQSEKDFIDIFIAQQFLFQRQWKKVRDYARSKGISIMGDMPIYVGYHSADVWANKKQFLLNRKGFPLIVSGVPPDAFSETGQLWGSPLYDWKAMEKDGFSWWVRRIQRATDLFDEFRIDHFRGFAGFWAVPSEEKIAILGRWKVGPGKPLFDAILQAVGKINIIAEDLGVITEDVVQLRKSIEAPGMAVLQFAFGSDAENPHLPHNHEQNQVVYTGTHDNDTIRGWWDTLPQEEKSNVLKYLSNIEEEEISRGLIEGAVSSVARIAIIPMQDVLGLGSDSRMNIPATQFGNWSWRIPSSTSFDNLDAEAKKLRDILATYGRL</sequence>
<keyword id="KW-0002">3D-structure</keyword>
<keyword id="KW-0035">Amyloplast</keyword>
<keyword id="KW-0119">Carbohydrate metabolism</keyword>
<keyword id="KW-0150">Chloroplast</keyword>
<keyword id="KW-0903">Direct protein sequencing</keyword>
<keyword id="KW-0328">Glycosyltransferase</keyword>
<keyword id="KW-0934">Plastid</keyword>
<keyword id="KW-1185">Reference proteome</keyword>
<keyword id="KW-0808">Transferase</keyword>
<keyword id="KW-0809">Transit peptide</keyword>
<comment type="function">
    <text>May act during starch breakdown to convert small oligosaccharides into larger molecules upon which starch phosphorylase can act, or may change the structure of starch molecules and grain architecture by modifying chain length, or may generate from starch and glucose oligosaccharides which can serve either as primers for new starch phosphoenzyme.</text>
</comment>
<comment type="catalytic activity">
    <reaction>
        <text>Transfers a segment of a (1-&gt;4)-alpha-D-glucan to a new position in an acceptor, which may be glucose or a (1-&gt;4)-alpha-D-glucan.</text>
        <dbReference type="EC" id="2.4.1.25"/>
    </reaction>
</comment>
<comment type="subcellular location">
    <subcellularLocation>
        <location>Plastid</location>
        <location>Chloroplast</location>
    </subcellularLocation>
    <subcellularLocation>
        <location>Plastid</location>
        <location>Amyloplast</location>
    </subcellularLocation>
</comment>
<comment type="tissue specificity">
    <text>Present in leaves, stems, roots, and stolons but is most abundant in developing and mature tubers.</text>
</comment>
<comment type="similarity">
    <text evidence="2">Belongs to the disproportionating enzyme family.</text>
</comment>
<proteinExistence type="evidence at protein level"/>
<protein>
    <recommendedName>
        <fullName>4-alpha-glucanotransferase, chloroplastic/amyloplastic</fullName>
        <ecNumber>2.4.1.25</ecNumber>
    </recommendedName>
    <alternativeName>
        <fullName>Amylomaltase</fullName>
    </alternativeName>
    <alternativeName>
        <fullName>Disproportionating enzyme</fullName>
        <shortName>D-enzyme</shortName>
    </alternativeName>
</protein>
<name>DPEP_SOLTU</name>